<gene>
    <name evidence="1" type="primary">atpF</name>
    <name type="ordered locus">COXBURSA331_A2144</name>
</gene>
<accession>A9NBC6</accession>
<sequence length="156" mass="17410">MDINASLIVQMLVFVVFIGLTMKFIWPPLTKALEARRKNIADGLAAAEEGRKELELAEIKSKEQLTEAKTQAAHIIEQANQRANHIVEEAKNKAREEGAHLIQLAKNEIEQEYNAAKTELLKQISTIAVAGAQKILQREVDKASNDRLVDELVSEI</sequence>
<evidence type="ECO:0000255" key="1">
    <source>
        <dbReference type="HAMAP-Rule" id="MF_01398"/>
    </source>
</evidence>
<dbReference type="EMBL" id="CP000890">
    <property type="protein sequence ID" value="ABX78761.1"/>
    <property type="molecule type" value="Genomic_DNA"/>
</dbReference>
<dbReference type="RefSeq" id="WP_005770032.1">
    <property type="nucleotide sequence ID" value="NC_010117.1"/>
</dbReference>
<dbReference type="SMR" id="A9NBC6"/>
<dbReference type="KEGG" id="cbs:COXBURSA331_A2144"/>
<dbReference type="HOGENOM" id="CLU_079215_4_5_6"/>
<dbReference type="GO" id="GO:0005886">
    <property type="term" value="C:plasma membrane"/>
    <property type="evidence" value="ECO:0007669"/>
    <property type="project" value="UniProtKB-SubCell"/>
</dbReference>
<dbReference type="GO" id="GO:0045259">
    <property type="term" value="C:proton-transporting ATP synthase complex"/>
    <property type="evidence" value="ECO:0007669"/>
    <property type="project" value="UniProtKB-KW"/>
</dbReference>
<dbReference type="GO" id="GO:0046933">
    <property type="term" value="F:proton-transporting ATP synthase activity, rotational mechanism"/>
    <property type="evidence" value="ECO:0007669"/>
    <property type="project" value="UniProtKB-UniRule"/>
</dbReference>
<dbReference type="GO" id="GO:0046961">
    <property type="term" value="F:proton-transporting ATPase activity, rotational mechanism"/>
    <property type="evidence" value="ECO:0007669"/>
    <property type="project" value="TreeGrafter"/>
</dbReference>
<dbReference type="CDD" id="cd06503">
    <property type="entry name" value="ATP-synt_Fo_b"/>
    <property type="match status" value="1"/>
</dbReference>
<dbReference type="FunFam" id="1.20.5.620:FF:000001">
    <property type="entry name" value="ATP synthase subunit b"/>
    <property type="match status" value="1"/>
</dbReference>
<dbReference type="Gene3D" id="1.20.5.620">
    <property type="entry name" value="F1F0 ATP synthase subunit B, membrane domain"/>
    <property type="match status" value="1"/>
</dbReference>
<dbReference type="HAMAP" id="MF_01398">
    <property type="entry name" value="ATP_synth_b_bprime"/>
    <property type="match status" value="1"/>
</dbReference>
<dbReference type="InterPro" id="IPR028987">
    <property type="entry name" value="ATP_synth_B-like_membr_sf"/>
</dbReference>
<dbReference type="InterPro" id="IPR002146">
    <property type="entry name" value="ATP_synth_b/b'su_bac/chlpt"/>
</dbReference>
<dbReference type="InterPro" id="IPR005864">
    <property type="entry name" value="ATP_synth_F0_bsu_bac"/>
</dbReference>
<dbReference type="InterPro" id="IPR050059">
    <property type="entry name" value="ATP_synthase_B_chain"/>
</dbReference>
<dbReference type="NCBIfam" id="TIGR01144">
    <property type="entry name" value="ATP_synt_b"/>
    <property type="match status" value="1"/>
</dbReference>
<dbReference type="NCBIfam" id="NF004411">
    <property type="entry name" value="PRK05759.1-2"/>
    <property type="match status" value="1"/>
</dbReference>
<dbReference type="PANTHER" id="PTHR33445:SF1">
    <property type="entry name" value="ATP SYNTHASE SUBUNIT B"/>
    <property type="match status" value="1"/>
</dbReference>
<dbReference type="PANTHER" id="PTHR33445">
    <property type="entry name" value="ATP SYNTHASE SUBUNIT B', CHLOROPLASTIC"/>
    <property type="match status" value="1"/>
</dbReference>
<dbReference type="Pfam" id="PF00430">
    <property type="entry name" value="ATP-synt_B"/>
    <property type="match status" value="1"/>
</dbReference>
<dbReference type="SUPFAM" id="SSF81573">
    <property type="entry name" value="F1F0 ATP synthase subunit B, membrane domain"/>
    <property type="match status" value="1"/>
</dbReference>
<organism>
    <name type="scientific">Coxiella burnetii (strain RSA 331 / Henzerling II)</name>
    <dbReference type="NCBI Taxonomy" id="360115"/>
    <lineage>
        <taxon>Bacteria</taxon>
        <taxon>Pseudomonadati</taxon>
        <taxon>Pseudomonadota</taxon>
        <taxon>Gammaproteobacteria</taxon>
        <taxon>Legionellales</taxon>
        <taxon>Coxiellaceae</taxon>
        <taxon>Coxiella</taxon>
    </lineage>
</organism>
<comment type="function">
    <text evidence="1">F(1)F(0) ATP synthase produces ATP from ADP in the presence of a proton or sodium gradient. F-type ATPases consist of two structural domains, F(1) containing the extramembraneous catalytic core and F(0) containing the membrane proton channel, linked together by a central stalk and a peripheral stalk. During catalysis, ATP synthesis in the catalytic domain of F(1) is coupled via a rotary mechanism of the central stalk subunits to proton translocation.</text>
</comment>
<comment type="function">
    <text evidence="1">Component of the F(0) channel, it forms part of the peripheral stalk, linking F(1) to F(0).</text>
</comment>
<comment type="subunit">
    <text evidence="1">F-type ATPases have 2 components, F(1) - the catalytic core - and F(0) - the membrane proton channel. F(1) has five subunits: alpha(3), beta(3), gamma(1), delta(1), epsilon(1). F(0) has three main subunits: a(1), b(2) and c(10-14). The alpha and beta chains form an alternating ring which encloses part of the gamma chain. F(1) is attached to F(0) by a central stalk formed by the gamma and epsilon chains, while a peripheral stalk is formed by the delta and b chains.</text>
</comment>
<comment type="subcellular location">
    <subcellularLocation>
        <location evidence="1">Cell inner membrane</location>
        <topology evidence="1">Single-pass membrane protein</topology>
    </subcellularLocation>
</comment>
<comment type="similarity">
    <text evidence="1">Belongs to the ATPase B chain family.</text>
</comment>
<reference key="1">
    <citation type="submission" date="2007-11" db="EMBL/GenBank/DDBJ databases">
        <title>Genome sequencing of phylogenetically and phenotypically diverse Coxiella burnetii isolates.</title>
        <authorList>
            <person name="Seshadri R."/>
            <person name="Samuel J.E."/>
        </authorList>
    </citation>
    <scope>NUCLEOTIDE SEQUENCE [LARGE SCALE GENOMIC DNA]</scope>
    <source>
        <strain>RSA 331 / Henzerling II</strain>
    </source>
</reference>
<keyword id="KW-0066">ATP synthesis</keyword>
<keyword id="KW-0997">Cell inner membrane</keyword>
<keyword id="KW-1003">Cell membrane</keyword>
<keyword id="KW-0138">CF(0)</keyword>
<keyword id="KW-0375">Hydrogen ion transport</keyword>
<keyword id="KW-0406">Ion transport</keyword>
<keyword id="KW-0472">Membrane</keyword>
<keyword id="KW-0812">Transmembrane</keyword>
<keyword id="KW-1133">Transmembrane helix</keyword>
<keyword id="KW-0813">Transport</keyword>
<proteinExistence type="inferred from homology"/>
<name>ATPF_COXBR</name>
<protein>
    <recommendedName>
        <fullName evidence="1">ATP synthase subunit b</fullName>
    </recommendedName>
    <alternativeName>
        <fullName evidence="1">ATP synthase F(0) sector subunit b</fullName>
    </alternativeName>
    <alternativeName>
        <fullName evidence="1">ATPase subunit I</fullName>
    </alternativeName>
    <alternativeName>
        <fullName evidence="1">F-type ATPase subunit b</fullName>
        <shortName evidence="1">F-ATPase subunit b</shortName>
    </alternativeName>
</protein>
<feature type="chain" id="PRO_0000368446" description="ATP synthase subunit b">
    <location>
        <begin position="1"/>
        <end position="156"/>
    </location>
</feature>
<feature type="transmembrane region" description="Helical" evidence="1">
    <location>
        <begin position="7"/>
        <end position="27"/>
    </location>
</feature>